<reference key="1">
    <citation type="journal article" date="2008" name="Antimicrob. Agents Chemother.">
        <title>Mutated response regulator graR is responsible for phenotypic conversion of Staphylococcus aureus from heterogeneous vancomycin-intermediate resistance to vancomycin-intermediate resistance.</title>
        <authorList>
            <person name="Neoh H.-M."/>
            <person name="Cui L."/>
            <person name="Yuzawa H."/>
            <person name="Takeuchi F."/>
            <person name="Matsuo M."/>
            <person name="Hiramatsu K."/>
        </authorList>
    </citation>
    <scope>NUCLEOTIDE SEQUENCE [LARGE SCALE GENOMIC DNA]</scope>
    <source>
        <strain>Mu3 / ATCC 700698</strain>
    </source>
</reference>
<organism>
    <name type="scientific">Staphylococcus aureus (strain Mu3 / ATCC 700698)</name>
    <dbReference type="NCBI Taxonomy" id="418127"/>
    <lineage>
        <taxon>Bacteria</taxon>
        <taxon>Bacillati</taxon>
        <taxon>Bacillota</taxon>
        <taxon>Bacilli</taxon>
        <taxon>Bacillales</taxon>
        <taxon>Staphylococcaceae</taxon>
        <taxon>Staphylococcus</taxon>
    </lineage>
</organism>
<sequence>MTHYHFVGIKGSGMSSLAQIMHDLGHEVQGSDIENYVFTEVALRNKGIKILPFDANNIKEDMVVIQGNAFASSHEEIVRAHQLKLDVVSYNDFLGQIIDQYTSVAVTGAHGKTSTTGLLSHVMNGDKKTSFLIGDGTGMGLPESDYFAFEACEYRRHFLSYKPDYAIMTNIDFDHPDYFKDINDVFDAFQEMAHNVKKGIIAWGDDEHLRKIEADVPIYYYGFKDSDDIYAQNIQITDKGTAFDVYVDGEFYDHFLSPQYGDHTVLNALAVIAISYLEKLDVTNIKEALETFGGVKRRFNETTIANQVIVDDYAHHPREISATIETARKKYPHKEVVAVFQPHTFSRTQAFLNEFAESLSKADRVFLCEIFGSIRENTGALTIQDLIDKIEGASLINEDSINVLEQFDNAVVLFMGAGDIQKLQNAYLDKLGMKNAF</sequence>
<gene>
    <name evidence="1" type="primary">murC</name>
    <name type="ordered locus">SAHV_1726</name>
</gene>
<proteinExistence type="inferred from homology"/>
<evidence type="ECO:0000255" key="1">
    <source>
        <dbReference type="HAMAP-Rule" id="MF_00046"/>
    </source>
</evidence>
<keyword id="KW-0067">ATP-binding</keyword>
<keyword id="KW-0131">Cell cycle</keyword>
<keyword id="KW-0132">Cell division</keyword>
<keyword id="KW-0133">Cell shape</keyword>
<keyword id="KW-0961">Cell wall biogenesis/degradation</keyword>
<keyword id="KW-0963">Cytoplasm</keyword>
<keyword id="KW-0436">Ligase</keyword>
<keyword id="KW-0547">Nucleotide-binding</keyword>
<keyword id="KW-0573">Peptidoglycan synthesis</keyword>
<protein>
    <recommendedName>
        <fullName evidence="1">UDP-N-acetylmuramate--L-alanine ligase</fullName>
        <ecNumber evidence="1">6.3.2.8</ecNumber>
    </recommendedName>
    <alternativeName>
        <fullName evidence="1">UDP-N-acetylmuramoyl-L-alanine synthetase</fullName>
    </alternativeName>
</protein>
<dbReference type="EC" id="6.3.2.8" evidence="1"/>
<dbReference type="EMBL" id="AP009324">
    <property type="protein sequence ID" value="BAF78609.1"/>
    <property type="molecule type" value="Genomic_DNA"/>
</dbReference>
<dbReference type="RefSeq" id="WP_000150169.1">
    <property type="nucleotide sequence ID" value="NC_009782.1"/>
</dbReference>
<dbReference type="SMR" id="A7X3H5"/>
<dbReference type="KEGG" id="saw:SAHV_1726"/>
<dbReference type="HOGENOM" id="CLU_028104_1_0_9"/>
<dbReference type="UniPathway" id="UPA00219"/>
<dbReference type="GO" id="GO:0005737">
    <property type="term" value="C:cytoplasm"/>
    <property type="evidence" value="ECO:0007669"/>
    <property type="project" value="UniProtKB-SubCell"/>
</dbReference>
<dbReference type="GO" id="GO:0005524">
    <property type="term" value="F:ATP binding"/>
    <property type="evidence" value="ECO:0007669"/>
    <property type="project" value="UniProtKB-UniRule"/>
</dbReference>
<dbReference type="GO" id="GO:0008763">
    <property type="term" value="F:UDP-N-acetylmuramate-L-alanine ligase activity"/>
    <property type="evidence" value="ECO:0007669"/>
    <property type="project" value="UniProtKB-UniRule"/>
</dbReference>
<dbReference type="GO" id="GO:0051301">
    <property type="term" value="P:cell division"/>
    <property type="evidence" value="ECO:0007669"/>
    <property type="project" value="UniProtKB-KW"/>
</dbReference>
<dbReference type="GO" id="GO:0071555">
    <property type="term" value="P:cell wall organization"/>
    <property type="evidence" value="ECO:0007669"/>
    <property type="project" value="UniProtKB-KW"/>
</dbReference>
<dbReference type="GO" id="GO:0009252">
    <property type="term" value="P:peptidoglycan biosynthetic process"/>
    <property type="evidence" value="ECO:0007669"/>
    <property type="project" value="UniProtKB-UniRule"/>
</dbReference>
<dbReference type="GO" id="GO:0008360">
    <property type="term" value="P:regulation of cell shape"/>
    <property type="evidence" value="ECO:0007669"/>
    <property type="project" value="UniProtKB-KW"/>
</dbReference>
<dbReference type="Gene3D" id="3.90.190.20">
    <property type="entry name" value="Mur ligase, C-terminal domain"/>
    <property type="match status" value="1"/>
</dbReference>
<dbReference type="Gene3D" id="3.40.1190.10">
    <property type="entry name" value="Mur-like, catalytic domain"/>
    <property type="match status" value="1"/>
</dbReference>
<dbReference type="Gene3D" id="3.40.50.720">
    <property type="entry name" value="NAD(P)-binding Rossmann-like Domain"/>
    <property type="match status" value="1"/>
</dbReference>
<dbReference type="HAMAP" id="MF_00046">
    <property type="entry name" value="MurC"/>
    <property type="match status" value="1"/>
</dbReference>
<dbReference type="InterPro" id="IPR036565">
    <property type="entry name" value="Mur-like_cat_sf"/>
</dbReference>
<dbReference type="InterPro" id="IPR004101">
    <property type="entry name" value="Mur_ligase_C"/>
</dbReference>
<dbReference type="InterPro" id="IPR036615">
    <property type="entry name" value="Mur_ligase_C_dom_sf"/>
</dbReference>
<dbReference type="InterPro" id="IPR013221">
    <property type="entry name" value="Mur_ligase_cen"/>
</dbReference>
<dbReference type="InterPro" id="IPR000713">
    <property type="entry name" value="Mur_ligase_N"/>
</dbReference>
<dbReference type="InterPro" id="IPR050061">
    <property type="entry name" value="MurCDEF_pg_biosynth"/>
</dbReference>
<dbReference type="InterPro" id="IPR005758">
    <property type="entry name" value="UDP-N-AcMur_Ala_ligase_MurC"/>
</dbReference>
<dbReference type="NCBIfam" id="TIGR01082">
    <property type="entry name" value="murC"/>
    <property type="match status" value="1"/>
</dbReference>
<dbReference type="PANTHER" id="PTHR43445:SF3">
    <property type="entry name" value="UDP-N-ACETYLMURAMATE--L-ALANINE LIGASE"/>
    <property type="match status" value="1"/>
</dbReference>
<dbReference type="PANTHER" id="PTHR43445">
    <property type="entry name" value="UDP-N-ACETYLMURAMATE--L-ALANINE LIGASE-RELATED"/>
    <property type="match status" value="1"/>
</dbReference>
<dbReference type="Pfam" id="PF01225">
    <property type="entry name" value="Mur_ligase"/>
    <property type="match status" value="1"/>
</dbReference>
<dbReference type="Pfam" id="PF02875">
    <property type="entry name" value="Mur_ligase_C"/>
    <property type="match status" value="1"/>
</dbReference>
<dbReference type="Pfam" id="PF08245">
    <property type="entry name" value="Mur_ligase_M"/>
    <property type="match status" value="1"/>
</dbReference>
<dbReference type="SUPFAM" id="SSF51984">
    <property type="entry name" value="MurCD N-terminal domain"/>
    <property type="match status" value="1"/>
</dbReference>
<dbReference type="SUPFAM" id="SSF53623">
    <property type="entry name" value="MurD-like peptide ligases, catalytic domain"/>
    <property type="match status" value="1"/>
</dbReference>
<dbReference type="SUPFAM" id="SSF53244">
    <property type="entry name" value="MurD-like peptide ligases, peptide-binding domain"/>
    <property type="match status" value="1"/>
</dbReference>
<feature type="chain" id="PRO_1000004418" description="UDP-N-acetylmuramate--L-alanine ligase">
    <location>
        <begin position="1"/>
        <end position="437"/>
    </location>
</feature>
<feature type="binding site" evidence="1">
    <location>
        <begin position="108"/>
        <end position="114"/>
    </location>
    <ligand>
        <name>ATP</name>
        <dbReference type="ChEBI" id="CHEBI:30616"/>
    </ligand>
</feature>
<accession>A7X3H5</accession>
<comment type="function">
    <text evidence="1">Cell wall formation.</text>
</comment>
<comment type="catalytic activity">
    <reaction evidence="1">
        <text>UDP-N-acetyl-alpha-D-muramate + L-alanine + ATP = UDP-N-acetyl-alpha-D-muramoyl-L-alanine + ADP + phosphate + H(+)</text>
        <dbReference type="Rhea" id="RHEA:23372"/>
        <dbReference type="ChEBI" id="CHEBI:15378"/>
        <dbReference type="ChEBI" id="CHEBI:30616"/>
        <dbReference type="ChEBI" id="CHEBI:43474"/>
        <dbReference type="ChEBI" id="CHEBI:57972"/>
        <dbReference type="ChEBI" id="CHEBI:70757"/>
        <dbReference type="ChEBI" id="CHEBI:83898"/>
        <dbReference type="ChEBI" id="CHEBI:456216"/>
        <dbReference type="EC" id="6.3.2.8"/>
    </reaction>
</comment>
<comment type="pathway">
    <text evidence="1">Cell wall biogenesis; peptidoglycan biosynthesis.</text>
</comment>
<comment type="subcellular location">
    <subcellularLocation>
        <location evidence="1">Cytoplasm</location>
    </subcellularLocation>
</comment>
<comment type="similarity">
    <text evidence="1">Belongs to the MurCDEF family.</text>
</comment>
<name>MURC_STAA1</name>